<evidence type="ECO:0000250" key="1"/>
<evidence type="ECO:0000255" key="2">
    <source>
        <dbReference type="PROSITE-ProRule" id="PRU00648"/>
    </source>
</evidence>
<evidence type="ECO:0000305" key="3"/>
<dbReference type="EC" id="3.2.1.-"/>
<dbReference type="EMBL" id="CP000444">
    <property type="protein sequence ID" value="ABI42439.1"/>
    <property type="molecule type" value="Genomic_DNA"/>
</dbReference>
<dbReference type="SMR" id="Q0HWR6"/>
<dbReference type="CAZy" id="GH109">
    <property type="family name" value="Glycoside Hydrolase Family 109"/>
</dbReference>
<dbReference type="KEGG" id="shm:Shewmr7_1440"/>
<dbReference type="HOGENOM" id="CLU_046965_0_0_6"/>
<dbReference type="GO" id="GO:0016798">
    <property type="term" value="F:hydrolase activity, acting on glycosyl bonds"/>
    <property type="evidence" value="ECO:0007669"/>
    <property type="project" value="UniProtKB-KW"/>
</dbReference>
<dbReference type="GO" id="GO:0000166">
    <property type="term" value="F:nucleotide binding"/>
    <property type="evidence" value="ECO:0007669"/>
    <property type="project" value="InterPro"/>
</dbReference>
<dbReference type="Gene3D" id="3.30.360.10">
    <property type="entry name" value="Dihydrodipicolinate Reductase, domain 2"/>
    <property type="match status" value="1"/>
</dbReference>
<dbReference type="Gene3D" id="3.40.50.720">
    <property type="entry name" value="NAD(P)-binding Rossmann-like Domain"/>
    <property type="match status" value="1"/>
</dbReference>
<dbReference type="InterPro" id="IPR000683">
    <property type="entry name" value="Gfo/Idh/MocA-like_OxRdtase_N"/>
</dbReference>
<dbReference type="InterPro" id="IPR050463">
    <property type="entry name" value="Gfo/Idh/MocA_oxidrdct_glycsds"/>
</dbReference>
<dbReference type="InterPro" id="IPR049303">
    <property type="entry name" value="Glyco_hydro_109_C"/>
</dbReference>
<dbReference type="InterPro" id="IPR036291">
    <property type="entry name" value="NAD(P)-bd_dom_sf"/>
</dbReference>
<dbReference type="InterPro" id="IPR006311">
    <property type="entry name" value="TAT_signal"/>
</dbReference>
<dbReference type="InterPro" id="IPR019546">
    <property type="entry name" value="TAT_signal_bac_arc"/>
</dbReference>
<dbReference type="NCBIfam" id="TIGR01409">
    <property type="entry name" value="TAT_signal_seq"/>
    <property type="match status" value="1"/>
</dbReference>
<dbReference type="PANTHER" id="PTHR43818">
    <property type="entry name" value="BCDNA.GH03377"/>
    <property type="match status" value="1"/>
</dbReference>
<dbReference type="PANTHER" id="PTHR43818:SF1">
    <property type="entry name" value="GLYCOSYL HYDROLASE FAMILY 109 PROTEIN"/>
    <property type="match status" value="1"/>
</dbReference>
<dbReference type="Pfam" id="PF01408">
    <property type="entry name" value="GFO_IDH_MocA"/>
    <property type="match status" value="1"/>
</dbReference>
<dbReference type="Pfam" id="PF21252">
    <property type="entry name" value="Glyco_hydro_109_C"/>
    <property type="match status" value="1"/>
</dbReference>
<dbReference type="Pfam" id="PF10518">
    <property type="entry name" value="TAT_signal"/>
    <property type="match status" value="1"/>
</dbReference>
<dbReference type="SUPFAM" id="SSF51735">
    <property type="entry name" value="NAD(P)-binding Rossmann-fold domains"/>
    <property type="match status" value="1"/>
</dbReference>
<dbReference type="PROSITE" id="PS51318">
    <property type="entry name" value="TAT"/>
    <property type="match status" value="1"/>
</dbReference>
<gene>
    <name type="ordered locus">Shewmr7_1440</name>
</gene>
<name>G1091_SHESR</name>
<reference key="1">
    <citation type="submission" date="2006-08" db="EMBL/GenBank/DDBJ databases">
        <title>Complete sequence of chromosome 1 of Shewanella sp. MR-7.</title>
        <authorList>
            <person name="Copeland A."/>
            <person name="Lucas S."/>
            <person name="Lapidus A."/>
            <person name="Barry K."/>
            <person name="Detter J.C."/>
            <person name="Glavina del Rio T."/>
            <person name="Hammon N."/>
            <person name="Israni S."/>
            <person name="Dalin E."/>
            <person name="Tice H."/>
            <person name="Pitluck S."/>
            <person name="Kiss H."/>
            <person name="Brettin T."/>
            <person name="Bruce D."/>
            <person name="Han C."/>
            <person name="Tapia R."/>
            <person name="Gilna P."/>
            <person name="Schmutz J."/>
            <person name="Larimer F."/>
            <person name="Land M."/>
            <person name="Hauser L."/>
            <person name="Kyrpides N."/>
            <person name="Mikhailova N."/>
            <person name="Nealson K."/>
            <person name="Konstantinidis K."/>
            <person name="Klappenbach J."/>
            <person name="Tiedje J."/>
            <person name="Richardson P."/>
        </authorList>
    </citation>
    <scope>NUCLEOTIDE SEQUENCE [LARGE SCALE GENOMIC DNA]</scope>
    <source>
        <strain>MR-7</strain>
    </source>
</reference>
<sequence>MHNIHRRHFLKAAGAVTAGLVTANIALNANASSVAPKPRVGKSVIGLIAPKMELVRVGFIGVGERGFSHVEQFCHLEGVELKAICDTHQAVIDRAVEHIVNQNRPKPAVYTGNDLSYRELLNRDDIDIVIISTPWEWHAPMAIDTMESGKHAFVEVPLALTVEECWQLVDTAERTQKNCMMMENVNYGREELMVLNMVRQGVFGELLHGEAAYIHELRWQMKEIDHKTGSWRTYWHTKRNGNLYPTHGLGPISQYMNINRGDRFDYLTSMSSPALGRALYAKREFPADHERNQLKYINGDMSTSLIKTVKGRTIMVQHDTTTPRPYSRHNLIQGTNGVFAGFPNRIAVEHGGFGKSYHEWDMDMQKWYDKYDHPLWQRIGKEAEINGGHGGMDFVMLWRMVYCLRNGEALDQDVYDGAAWSVVNILSEQSLNNRSNSVNFPDFTRGAWEHATPLGIVGA</sequence>
<comment type="function">
    <text evidence="1">Glycosidase.</text>
</comment>
<comment type="cofactor">
    <cofactor evidence="1">
        <name>NAD(+)</name>
        <dbReference type="ChEBI" id="CHEBI:57540"/>
    </cofactor>
    <text evidence="1">Binds 1 NAD(+) per subunit. The NAD(+) cannot dissociate.</text>
</comment>
<comment type="PTM">
    <text>Predicted to be exported by the Tat system. The position of the signal peptide cleavage has not been experimentally proven.</text>
</comment>
<comment type="similarity">
    <text evidence="3">Belongs to the Gfo/Idh/MocA family. Glycosyl hydrolase 109 subfamily.</text>
</comment>
<organism>
    <name type="scientific">Shewanella sp. (strain MR-7)</name>
    <dbReference type="NCBI Taxonomy" id="60481"/>
    <lineage>
        <taxon>Bacteria</taxon>
        <taxon>Pseudomonadati</taxon>
        <taxon>Pseudomonadota</taxon>
        <taxon>Gammaproteobacteria</taxon>
        <taxon>Alteromonadales</taxon>
        <taxon>Shewanellaceae</taxon>
        <taxon>Shewanella</taxon>
    </lineage>
</organism>
<protein>
    <recommendedName>
        <fullName>Glycosyl hydrolase family 109 protein 1</fullName>
        <ecNumber>3.2.1.-</ecNumber>
    </recommendedName>
</protein>
<proteinExistence type="inferred from homology"/>
<keyword id="KW-0326">Glycosidase</keyword>
<keyword id="KW-0378">Hydrolase</keyword>
<keyword id="KW-0520">NAD</keyword>
<keyword id="KW-0732">Signal</keyword>
<feature type="signal peptide" description="Tat-type signal" evidence="2">
    <location>
        <begin position="1"/>
        <end position="31"/>
    </location>
</feature>
<feature type="chain" id="PRO_5000128748" description="Glycosyl hydrolase family 109 protein 1">
    <location>
        <begin position="32"/>
        <end position="459"/>
    </location>
</feature>
<feature type="binding site" evidence="1">
    <location>
        <begin position="64"/>
        <end position="65"/>
    </location>
    <ligand>
        <name>NAD(+)</name>
        <dbReference type="ChEBI" id="CHEBI:57540"/>
    </ligand>
</feature>
<feature type="binding site" evidence="1">
    <location>
        <position position="86"/>
    </location>
    <ligand>
        <name>NAD(+)</name>
        <dbReference type="ChEBI" id="CHEBI:57540"/>
    </ligand>
</feature>
<feature type="binding site" evidence="1">
    <location>
        <begin position="135"/>
        <end position="138"/>
    </location>
    <ligand>
        <name>NAD(+)</name>
        <dbReference type="ChEBI" id="CHEBI:57540"/>
    </ligand>
</feature>
<feature type="binding site" evidence="1">
    <location>
        <begin position="155"/>
        <end position="156"/>
    </location>
    <ligand>
        <name>NAD(+)</name>
        <dbReference type="ChEBI" id="CHEBI:57540"/>
    </ligand>
</feature>
<feature type="binding site" evidence="1">
    <location>
        <position position="184"/>
    </location>
    <ligand>
        <name>NAD(+)</name>
        <dbReference type="ChEBI" id="CHEBI:57540"/>
    </ligand>
</feature>
<feature type="binding site" evidence="1">
    <location>
        <position position="213"/>
    </location>
    <ligand>
        <name>substrate</name>
    </ligand>
</feature>
<feature type="binding site" evidence="1">
    <location>
        <position position="232"/>
    </location>
    <ligand>
        <name>substrate</name>
    </ligand>
</feature>
<feature type="binding site" evidence="1">
    <location>
        <begin position="244"/>
        <end position="247"/>
    </location>
    <ligand>
        <name>substrate</name>
    </ligand>
</feature>
<feature type="binding site" evidence="1">
    <location>
        <position position="244"/>
    </location>
    <ligand>
        <name>NAD(+)</name>
        <dbReference type="ChEBI" id="CHEBI:57540"/>
    </ligand>
</feature>
<feature type="binding site" evidence="1">
    <location>
        <position position="326"/>
    </location>
    <ligand>
        <name>substrate</name>
    </ligand>
</feature>
<accession>Q0HWR6</accession>